<keyword id="KW-0165">Cleavage on pair of basic residues</keyword>
<keyword id="KW-1015">Disulfide bond</keyword>
<keyword id="KW-0378">Hydrolase</keyword>
<keyword id="KW-0479">Metal-binding</keyword>
<keyword id="KW-0482">Metalloprotease</keyword>
<keyword id="KW-0645">Protease</keyword>
<keyword id="KW-0964">Secreted</keyword>
<keyword id="KW-0732">Signal</keyword>
<keyword id="KW-0843">Virulence</keyword>
<keyword id="KW-0862">Zinc</keyword>
<keyword id="KW-0865">Zymogen</keyword>
<comment type="function">
    <text evidence="1">Probable secreted metalloprotease that shows high activities on basic nuclear substrates such as histone and protamine (By similarity). May be involved in virulence.</text>
</comment>
<comment type="catalytic activity">
    <reaction>
        <text>Preferential cleavage of bonds with hydrophobic residues in P1'. Also 3-Asn-|-Gln-4 and 8-Gly-|-Ser-9 bonds in insulin B chain.</text>
        <dbReference type="EC" id="3.4.24.39"/>
    </reaction>
</comment>
<comment type="cofactor">
    <cofactor evidence="2">
        <name>Zn(2+)</name>
        <dbReference type="ChEBI" id="CHEBI:29105"/>
    </cofactor>
    <text evidence="2">Binds 1 zinc ion per subunit.</text>
</comment>
<comment type="subcellular location">
    <subcellularLocation>
        <location evidence="5">Secreted</location>
    </subcellularLocation>
</comment>
<comment type="similarity">
    <text evidence="5">Belongs to the peptidase M35 family.</text>
</comment>
<reference key="1">
    <citation type="submission" date="2008-02" db="EMBL/GenBank/DDBJ databases">
        <title>Trichophyton rubrum secreted neutral proteases II.</title>
        <authorList>
            <person name="Monod M."/>
            <person name="Lechenne B."/>
            <person name="Zaugg C."/>
        </authorList>
    </citation>
    <scope>NUCLEOTIDE SEQUENCE [GENOMIC DNA]</scope>
</reference>
<proteinExistence type="inferred from homology"/>
<accession>C0IPP2</accession>
<evidence type="ECO:0000250" key="1"/>
<evidence type="ECO:0000250" key="2">
    <source>
        <dbReference type="UniProtKB" id="P46076"/>
    </source>
</evidence>
<evidence type="ECO:0000255" key="3"/>
<evidence type="ECO:0000255" key="4">
    <source>
        <dbReference type="PROSITE-ProRule" id="PRU10095"/>
    </source>
</evidence>
<evidence type="ECO:0000305" key="5"/>
<feature type="signal peptide" evidence="3">
    <location>
        <begin position="1"/>
        <end position="19"/>
    </location>
</feature>
<feature type="propeptide" id="PRO_0000388464" evidence="1">
    <location>
        <begin position="20"/>
        <end position="189"/>
    </location>
</feature>
<feature type="chain" id="PRO_0000388465" description="Probable neutral protease 2 homolog B">
    <location>
        <begin position="190"/>
        <end position="366"/>
    </location>
</feature>
<feature type="active site" evidence="4">
    <location>
        <position position="318"/>
    </location>
</feature>
<feature type="binding site" evidence="4">
    <location>
        <position position="317"/>
    </location>
    <ligand>
        <name>Zn(2+)</name>
        <dbReference type="ChEBI" id="CHEBI:29105"/>
        <note>catalytic</note>
    </ligand>
</feature>
<feature type="binding site" evidence="4">
    <location>
        <position position="321"/>
    </location>
    <ligand>
        <name>Zn(2+)</name>
        <dbReference type="ChEBI" id="CHEBI:29105"/>
        <note>catalytic</note>
    </ligand>
</feature>
<feature type="binding site" evidence="4">
    <location>
        <position position="332"/>
    </location>
    <ligand>
        <name>Zn(2+)</name>
        <dbReference type="ChEBI" id="CHEBI:29105"/>
        <note>catalytic</note>
    </ligand>
</feature>
<feature type="disulfide bond" evidence="2">
    <location>
        <begin position="197"/>
        <end position="267"/>
    </location>
</feature>
<feature type="disulfide bond" evidence="2">
    <location>
        <begin position="274"/>
        <end position="292"/>
    </location>
</feature>
<feature type="disulfide bond" evidence="2">
    <location>
        <begin position="306"/>
        <end position="366"/>
    </location>
</feature>
<gene>
    <name type="primary">NpII-B</name>
</gene>
<name>NPIIB_TRIRU</name>
<organism>
    <name type="scientific">Trichophyton rubrum</name>
    <name type="common">Athlete's foot fungus</name>
    <name type="synonym">Epidermophyton rubrum</name>
    <dbReference type="NCBI Taxonomy" id="5551"/>
    <lineage>
        <taxon>Eukaryota</taxon>
        <taxon>Fungi</taxon>
        <taxon>Dikarya</taxon>
        <taxon>Ascomycota</taxon>
        <taxon>Pezizomycotina</taxon>
        <taxon>Eurotiomycetes</taxon>
        <taxon>Eurotiomycetidae</taxon>
        <taxon>Onygenales</taxon>
        <taxon>Arthrodermataceae</taxon>
        <taxon>Trichophyton</taxon>
    </lineage>
</organism>
<protein>
    <recommendedName>
        <fullName>Probable neutral protease 2 homolog B</fullName>
        <ecNumber>3.4.24.39</ecNumber>
    </recommendedName>
    <alternativeName>
        <fullName>Deuterolysin B</fullName>
    </alternativeName>
</protein>
<sequence>MQVIVALAALSSLAAPALGFSIPRGVPVSQSMIDVKLSATGNSMVKATITNNGNRALNLLKFHTIMDSNPTRKVSIESEDGKEIQFTGMMPTYKEKDLKPSYFISLPPKGTVEHSFDIARTHDLSRGGKFTLKAEGMVPIAEENGTEITGAAKYHSNELHMTIDGEKAASVENAFGIVKRGPRSRITKRTSIDMQSCGNSQELQALTAALKASAQLSSMSAQAVSQNQDKYMEYFKDPQYMQTVQSRFQAVAQESSSTTGGGTTYHCSDTMGGCEEGVLAYTLPSQNEVFNCPIYYSDLPPLSNECHAQDQATTTLHELTHNPAVQEPFCEDNGYGYERATALSAEKAVQNADSYALFANAIYVGC</sequence>
<dbReference type="EC" id="3.4.24.39"/>
<dbReference type="EMBL" id="EU445235">
    <property type="protein sequence ID" value="ACC65886.1"/>
    <property type="molecule type" value="Genomic_DNA"/>
</dbReference>
<dbReference type="SMR" id="C0IPP2"/>
<dbReference type="MEROPS" id="M35.001"/>
<dbReference type="VEuPathDB" id="FungiDB:TERG_00673"/>
<dbReference type="GO" id="GO:0005576">
    <property type="term" value="C:extracellular region"/>
    <property type="evidence" value="ECO:0007669"/>
    <property type="project" value="UniProtKB-SubCell"/>
</dbReference>
<dbReference type="GO" id="GO:0046872">
    <property type="term" value="F:metal ion binding"/>
    <property type="evidence" value="ECO:0007669"/>
    <property type="project" value="UniProtKB-KW"/>
</dbReference>
<dbReference type="GO" id="GO:0004222">
    <property type="term" value="F:metalloendopeptidase activity"/>
    <property type="evidence" value="ECO:0007669"/>
    <property type="project" value="InterPro"/>
</dbReference>
<dbReference type="GO" id="GO:0006508">
    <property type="term" value="P:proteolysis"/>
    <property type="evidence" value="ECO:0007669"/>
    <property type="project" value="UniProtKB-KW"/>
</dbReference>
<dbReference type="CDD" id="cd11008">
    <property type="entry name" value="M35_deuterolysin_like"/>
    <property type="match status" value="1"/>
</dbReference>
<dbReference type="Gene3D" id="2.60.40.2970">
    <property type="match status" value="1"/>
</dbReference>
<dbReference type="Gene3D" id="3.40.390.10">
    <property type="entry name" value="Collagenase (Catalytic Domain)"/>
    <property type="match status" value="1"/>
</dbReference>
<dbReference type="InterPro" id="IPR050414">
    <property type="entry name" value="Fungal_M35_metalloproteases"/>
</dbReference>
<dbReference type="InterPro" id="IPR024079">
    <property type="entry name" value="MetalloPept_cat_dom_sf"/>
</dbReference>
<dbReference type="InterPro" id="IPR001384">
    <property type="entry name" value="Peptidase_M35"/>
</dbReference>
<dbReference type="PANTHER" id="PTHR37016">
    <property type="match status" value="1"/>
</dbReference>
<dbReference type="PANTHER" id="PTHR37016:SF7">
    <property type="entry name" value="NEUTRAL PROTEASE 2"/>
    <property type="match status" value="1"/>
</dbReference>
<dbReference type="Pfam" id="PF02102">
    <property type="entry name" value="Peptidase_M35"/>
    <property type="match status" value="1"/>
</dbReference>
<dbReference type="PRINTS" id="PR00768">
    <property type="entry name" value="DEUTEROLYSIN"/>
</dbReference>
<dbReference type="SUPFAM" id="SSF55486">
    <property type="entry name" value="Metalloproteases ('zincins'), catalytic domain"/>
    <property type="match status" value="1"/>
</dbReference>
<dbReference type="PROSITE" id="PS00142">
    <property type="entry name" value="ZINC_PROTEASE"/>
    <property type="match status" value="1"/>
</dbReference>